<gene>
    <name type="primary">yfaS</name>
    <name type="ordered locus">Z3481</name>
    <name type="ordered locus">ECs3111</name>
</gene>
<reference key="1">
    <citation type="journal article" date="2001" name="Nature">
        <title>Genome sequence of enterohaemorrhagic Escherichia coli O157:H7.</title>
        <authorList>
            <person name="Perna N.T."/>
            <person name="Plunkett G. III"/>
            <person name="Burland V."/>
            <person name="Mau B."/>
            <person name="Glasner J.D."/>
            <person name="Rose D.J."/>
            <person name="Mayhew G.F."/>
            <person name="Evans P.S."/>
            <person name="Gregor J."/>
            <person name="Kirkpatrick H.A."/>
            <person name="Posfai G."/>
            <person name="Hackett J."/>
            <person name="Klink S."/>
            <person name="Boutin A."/>
            <person name="Shao Y."/>
            <person name="Miller L."/>
            <person name="Grotbeck E.J."/>
            <person name="Davis N.W."/>
            <person name="Lim A."/>
            <person name="Dimalanta E.T."/>
            <person name="Potamousis K."/>
            <person name="Apodaca J."/>
            <person name="Anantharaman T.S."/>
            <person name="Lin J."/>
            <person name="Yen G."/>
            <person name="Schwartz D.C."/>
            <person name="Welch R.A."/>
            <person name="Blattner F.R."/>
        </authorList>
    </citation>
    <scope>NUCLEOTIDE SEQUENCE [LARGE SCALE GENOMIC DNA]</scope>
    <source>
        <strain>O157:H7 / EDL933 / ATCC 700927 / EHEC</strain>
    </source>
</reference>
<reference key="2">
    <citation type="journal article" date="2001" name="DNA Res.">
        <title>Complete genome sequence of enterohemorrhagic Escherichia coli O157:H7 and genomic comparison with a laboratory strain K-12.</title>
        <authorList>
            <person name="Hayashi T."/>
            <person name="Makino K."/>
            <person name="Ohnishi M."/>
            <person name="Kurokawa K."/>
            <person name="Ishii K."/>
            <person name="Yokoyama K."/>
            <person name="Han C.-G."/>
            <person name="Ohtsubo E."/>
            <person name="Nakayama K."/>
            <person name="Murata T."/>
            <person name="Tanaka M."/>
            <person name="Tobe T."/>
            <person name="Iida T."/>
            <person name="Takami H."/>
            <person name="Honda T."/>
            <person name="Sasakawa C."/>
            <person name="Ogasawara N."/>
            <person name="Yasunaga T."/>
            <person name="Kuhara S."/>
            <person name="Shiba T."/>
            <person name="Hattori M."/>
            <person name="Shinagawa H."/>
        </authorList>
    </citation>
    <scope>NUCLEOTIDE SEQUENCE [LARGE SCALE GENOMIC DNA]</scope>
    <source>
        <strain>O157:H7 / Sakai / RIMD 0509952 / EHEC</strain>
    </source>
</reference>
<sequence>MDTQRFQSQFHWHLSFKFSGAIAACLSLSLVGTGLANADDSLPSSNYAPPAGGTFFLLADSSFSSSEESKVRLEAPGRDYRRYQMEEYGGVDVRLYRIPDPMAFLRQQKNLHRIVVQPQYLGDGLNNTLTWLWDNWYGKSRRVMQRTFSSQSRQNVTQALPELQLGNAIIKPSRYVQNNQFSPLKKYPLVEQFRYPLWQAKPVEPQQGVKLEGASSNFISPQPGNIYIPLGQQEPGLYLVEAMVGGYRATTVVFVSDTVALSKVSGKELLVWTAGKKQGEAKPGSEILWTDGLGVMTRGVTDDSGTLQLQHISPERSYILGKDAEGGVFVSENFFYESEIYNTRLYIFTDRPLYRAGDRVDVKVMGREFHDPLHSSPIVSAPAKLSVLDANGSLLQTVDVTLDARNGGQGSFRLPENAVAGGYELRLAYRNQVYSSSFRVANYIKPHFEIGLALDKKEFKTGEAVSGKLQLLYPDGEPVKNARVQLSLRAQQLSMVGNDLRYAGRFPVSLEGSETVSDASGHVALNLPAADKPSRYLLTVSASDGAAYRVTTTKEILIERGLAHYSLSTAAQYSNSGESVVFRYAALESSKQVPVTYEWLRLEDRTSHSGDLPSGGKSFTVNFDKPGNYNLTLRDKDGLILAGLSHAVSGKGSMSHTGTVDIVADKTLYQPGETAKMLITFPEPIDEALLTLERDRVEQQSLLSHPANWLTLQRLNDTQYEARVPVSNSFAPNITFSVLYTRNGQYSFQNAGIKVAVPQLDIRVKTDKTHYQPGELVNVELTSSLKGKPVSAQLTVGVVDEMIYALQPEIAPNIGKFFYPLGRNNVRTSSSLSFISYDQALSSEPVAPGATNRSERRVKMLERPRREEVDTAAWMPSLTTDKQGKAYFTFLMPDSLTRWRITARGMNGDGLVGQGRAYLRSEKNLYMKWSMPTVYRVGDKPSAGLFIFSQQDNEPVALVTKFAGAEMRQTLTLHKGANYISLAQNIQQSGLLSAELQQNGQVQDSISTKLSFVDNSWPVEQQKNVMLGGGDNALMLPEQASNIRLQSSETPQEIFRNNLDALVDEPWGGVINTGSRLIPLSLAWRSLADHQSAAANDIRQMIQDNRLRLMQLAGPGARFTWWGEDGNGDAFLTAWAWYADWQASQALGVTQQPEYWQHMLDSYAEQADNMPLLHRALVLAWAQEMNLPCKTLLKGLDEAIARRGTKTEDFSEEDTRDINDSLILDTPESPLADAVANVLTMTLLKKAQLKSTVMPQVQQYAWDKAVNSNQPLAHTVVLLNSGGDATQAAAILSGLTAEQSTIERALAMNWLAKYMATMPSVVLPAPAGAWAKHKLTGGGEYWRWVGQGVPDILSFGDELSPQNVQVRWREAAKTAQQSNIPVTVERQLYRLIPGEEEMSFTLQPVTSNEIDSDALYLDEITLTSEQDAVLRYGQVEVPLPPGADVERTTWGISVNKPNAGKQQGQLLEKARNEMGELAYMVPVKELTGTVTFRHLLRFSQKGQFVLPPARYVRSYAPAQQSVAAGSEWTGMQVK</sequence>
<evidence type="ECO:0000255" key="1"/>
<evidence type="ECO:0000305" key="2"/>
<keyword id="KW-1185">Reference proteome</keyword>
<keyword id="KW-0732">Signal</keyword>
<proteinExistence type="inferred from homology"/>
<name>A2MGH_ECO57</name>
<feature type="signal peptide" evidence="1">
    <location>
        <begin position="1"/>
        <end position="38"/>
    </location>
</feature>
<feature type="chain" id="PRO_0000036240" description="Alpha-2-macroglobulin homolog">
    <location>
        <begin position="39"/>
        <end position="1534"/>
    </location>
</feature>
<accession>Q8XE35</accession>
<organism>
    <name type="scientific">Escherichia coli O157:H7</name>
    <dbReference type="NCBI Taxonomy" id="83334"/>
    <lineage>
        <taxon>Bacteria</taxon>
        <taxon>Pseudomonadati</taxon>
        <taxon>Pseudomonadota</taxon>
        <taxon>Gammaproteobacteria</taxon>
        <taxon>Enterobacterales</taxon>
        <taxon>Enterobacteriaceae</taxon>
        <taxon>Escherichia</taxon>
    </lineage>
</organism>
<protein>
    <recommendedName>
        <fullName evidence="2">Alpha-2-macroglobulin homolog</fullName>
    </recommendedName>
</protein>
<dbReference type="EMBL" id="AE005174">
    <property type="protein sequence ID" value="AAG57357.1"/>
    <property type="molecule type" value="Genomic_DNA"/>
</dbReference>
<dbReference type="EMBL" id="BA000007">
    <property type="protein sequence ID" value="BAB36534.2"/>
    <property type="status" value="ALT_INIT"/>
    <property type="molecule type" value="Genomic_DNA"/>
</dbReference>
<dbReference type="PIR" id="A85862">
    <property type="entry name" value="A85862"/>
</dbReference>
<dbReference type="PIR" id="G91017">
    <property type="entry name" value="G91017"/>
</dbReference>
<dbReference type="RefSeq" id="NP_311138.1">
    <property type="nucleotide sequence ID" value="NC_002695.1"/>
</dbReference>
<dbReference type="SMR" id="Q8XE35"/>
<dbReference type="STRING" id="155864.Z3481"/>
<dbReference type="MEROPS" id="I39.008"/>
<dbReference type="GeneID" id="916819"/>
<dbReference type="KEGG" id="ece:Z3481"/>
<dbReference type="KEGG" id="ecs:ECs_3111"/>
<dbReference type="PATRIC" id="fig|386585.9.peg.3245"/>
<dbReference type="eggNOG" id="COG2373">
    <property type="taxonomic scope" value="Bacteria"/>
</dbReference>
<dbReference type="HOGENOM" id="CLU_004561_0_0_6"/>
<dbReference type="OMA" id="YAYYADW"/>
<dbReference type="Proteomes" id="UP000000558">
    <property type="component" value="Chromosome"/>
</dbReference>
<dbReference type="Proteomes" id="UP000002519">
    <property type="component" value="Chromosome"/>
</dbReference>
<dbReference type="GO" id="GO:0004866">
    <property type="term" value="F:endopeptidase inhibitor activity"/>
    <property type="evidence" value="ECO:0007669"/>
    <property type="project" value="InterPro"/>
</dbReference>
<dbReference type="CDD" id="cd00146">
    <property type="entry name" value="PKD"/>
    <property type="match status" value="1"/>
</dbReference>
<dbReference type="Gene3D" id="2.60.40.1930">
    <property type="match status" value="1"/>
</dbReference>
<dbReference type="Gene3D" id="2.60.40.10">
    <property type="entry name" value="Immunoglobulins"/>
    <property type="match status" value="1"/>
</dbReference>
<dbReference type="InterPro" id="IPR011625">
    <property type="entry name" value="A2M_N_BRD"/>
</dbReference>
<dbReference type="InterPro" id="IPR013783">
    <property type="entry name" value="Ig-like_fold"/>
</dbReference>
<dbReference type="InterPro" id="IPR001599">
    <property type="entry name" value="Macroglobln_a2"/>
</dbReference>
<dbReference type="InterPro" id="IPR002890">
    <property type="entry name" value="MG2"/>
</dbReference>
<dbReference type="InterPro" id="IPR008930">
    <property type="entry name" value="Terpenoid_cyclase/PrenylTrfase"/>
</dbReference>
<dbReference type="InterPro" id="IPR051802">
    <property type="entry name" value="YfhM-like"/>
</dbReference>
<dbReference type="PANTHER" id="PTHR40094">
    <property type="entry name" value="ALPHA-2-MACROGLOBULIN HOMOLOG"/>
    <property type="match status" value="1"/>
</dbReference>
<dbReference type="PANTHER" id="PTHR40094:SF1">
    <property type="entry name" value="UBIQUITIN DOMAIN-CONTAINING PROTEIN"/>
    <property type="match status" value="1"/>
</dbReference>
<dbReference type="Pfam" id="PF00207">
    <property type="entry name" value="A2M"/>
    <property type="match status" value="1"/>
</dbReference>
<dbReference type="Pfam" id="PF07703">
    <property type="entry name" value="A2M_BRD"/>
    <property type="match status" value="1"/>
</dbReference>
<dbReference type="Pfam" id="PF01835">
    <property type="entry name" value="MG2"/>
    <property type="match status" value="1"/>
</dbReference>
<dbReference type="SMART" id="SM01360">
    <property type="entry name" value="A2M"/>
    <property type="match status" value="1"/>
</dbReference>
<dbReference type="SMART" id="SM01359">
    <property type="entry name" value="A2M_N_2"/>
    <property type="match status" value="1"/>
</dbReference>
<dbReference type="SUPFAM" id="SSF48239">
    <property type="entry name" value="Terpenoid cyclases/Protein prenyltransferases"/>
    <property type="match status" value="1"/>
</dbReference>
<comment type="similarity">
    <text evidence="2">Belongs to the protease inhibitor I39 (alpha-2-macroglobulin) family. Bacterial alpha-2-macroglobulin subfamily.</text>
</comment>
<comment type="caution">
    <text evidence="2">Lacks the conserved thioester bond that is characteristic of the alpha-2-macroglobulins.</text>
</comment>
<comment type="sequence caution" evidence="2">
    <conflict type="erroneous initiation">
        <sequence resource="EMBL-CDS" id="BAB36534"/>
    </conflict>
    <text>Truncated N-terminus.</text>
</comment>